<accession>P59605</accession>
<reference key="1">
    <citation type="journal article" date="2003" name="Lancet">
        <title>Genome sequence of Vibrio parahaemolyticus: a pathogenic mechanism distinct from that of V. cholerae.</title>
        <authorList>
            <person name="Makino K."/>
            <person name="Oshima K."/>
            <person name="Kurokawa K."/>
            <person name="Yokoyama K."/>
            <person name="Uda T."/>
            <person name="Tagomori K."/>
            <person name="Iijima Y."/>
            <person name="Najima M."/>
            <person name="Nakano M."/>
            <person name="Yamashita A."/>
            <person name="Kubota Y."/>
            <person name="Kimura S."/>
            <person name="Yasunaga T."/>
            <person name="Honda T."/>
            <person name="Shinagawa H."/>
            <person name="Hattori M."/>
            <person name="Iida T."/>
        </authorList>
    </citation>
    <scope>NUCLEOTIDE SEQUENCE [LARGE SCALE GENOMIC DNA]</scope>
    <source>
        <strain>RIMD 2210633</strain>
    </source>
</reference>
<name>ASSY_VIBPA</name>
<comment type="catalytic activity">
    <reaction evidence="1">
        <text>L-citrulline + L-aspartate + ATP = 2-(N(omega)-L-arginino)succinate + AMP + diphosphate + H(+)</text>
        <dbReference type="Rhea" id="RHEA:10932"/>
        <dbReference type="ChEBI" id="CHEBI:15378"/>
        <dbReference type="ChEBI" id="CHEBI:29991"/>
        <dbReference type="ChEBI" id="CHEBI:30616"/>
        <dbReference type="ChEBI" id="CHEBI:33019"/>
        <dbReference type="ChEBI" id="CHEBI:57472"/>
        <dbReference type="ChEBI" id="CHEBI:57743"/>
        <dbReference type="ChEBI" id="CHEBI:456215"/>
        <dbReference type="EC" id="6.3.4.5"/>
    </reaction>
</comment>
<comment type="pathway">
    <text evidence="1">Amino-acid biosynthesis; L-arginine biosynthesis; L-arginine from L-ornithine and carbamoyl phosphate: step 2/3.</text>
</comment>
<comment type="subunit">
    <text evidence="1">Homotetramer.</text>
</comment>
<comment type="subcellular location">
    <subcellularLocation>
        <location evidence="1">Cytoplasm</location>
    </subcellularLocation>
</comment>
<comment type="similarity">
    <text evidence="1">Belongs to the argininosuccinate synthase family. Type 1 subfamily.</text>
</comment>
<proteinExistence type="inferred from homology"/>
<gene>
    <name evidence="1" type="primary">argG</name>
    <name type="ordered locus">VP2757</name>
</gene>
<dbReference type="EC" id="6.3.4.5" evidence="1"/>
<dbReference type="EMBL" id="BA000031">
    <property type="protein sequence ID" value="BAC61020.1"/>
    <property type="molecule type" value="Genomic_DNA"/>
</dbReference>
<dbReference type="RefSeq" id="NP_799136.1">
    <property type="nucleotide sequence ID" value="NC_004603.1"/>
</dbReference>
<dbReference type="RefSeq" id="WP_005465152.1">
    <property type="nucleotide sequence ID" value="NC_004603.1"/>
</dbReference>
<dbReference type="SMR" id="P59605"/>
<dbReference type="GeneID" id="1190307"/>
<dbReference type="KEGG" id="vpa:VP2757"/>
<dbReference type="PATRIC" id="fig|223926.6.peg.2653"/>
<dbReference type="eggNOG" id="COG0137">
    <property type="taxonomic scope" value="Bacteria"/>
</dbReference>
<dbReference type="HOGENOM" id="CLU_032784_4_2_6"/>
<dbReference type="UniPathway" id="UPA00068">
    <property type="reaction ID" value="UER00113"/>
</dbReference>
<dbReference type="Proteomes" id="UP000002493">
    <property type="component" value="Chromosome 1"/>
</dbReference>
<dbReference type="GO" id="GO:0005737">
    <property type="term" value="C:cytoplasm"/>
    <property type="evidence" value="ECO:0007669"/>
    <property type="project" value="UniProtKB-SubCell"/>
</dbReference>
<dbReference type="GO" id="GO:0004055">
    <property type="term" value="F:argininosuccinate synthase activity"/>
    <property type="evidence" value="ECO:0007669"/>
    <property type="project" value="UniProtKB-UniRule"/>
</dbReference>
<dbReference type="GO" id="GO:0005524">
    <property type="term" value="F:ATP binding"/>
    <property type="evidence" value="ECO:0007669"/>
    <property type="project" value="UniProtKB-UniRule"/>
</dbReference>
<dbReference type="GO" id="GO:0000053">
    <property type="term" value="P:argininosuccinate metabolic process"/>
    <property type="evidence" value="ECO:0007669"/>
    <property type="project" value="TreeGrafter"/>
</dbReference>
<dbReference type="GO" id="GO:0006526">
    <property type="term" value="P:L-arginine biosynthetic process"/>
    <property type="evidence" value="ECO:0007669"/>
    <property type="project" value="UniProtKB-UniRule"/>
</dbReference>
<dbReference type="GO" id="GO:0000050">
    <property type="term" value="P:urea cycle"/>
    <property type="evidence" value="ECO:0007669"/>
    <property type="project" value="TreeGrafter"/>
</dbReference>
<dbReference type="CDD" id="cd01999">
    <property type="entry name" value="ASS"/>
    <property type="match status" value="1"/>
</dbReference>
<dbReference type="FunFam" id="3.40.50.620:FF:000019">
    <property type="entry name" value="Argininosuccinate synthase"/>
    <property type="match status" value="1"/>
</dbReference>
<dbReference type="FunFam" id="3.90.1260.10:FF:000007">
    <property type="entry name" value="Argininosuccinate synthase"/>
    <property type="match status" value="1"/>
</dbReference>
<dbReference type="Gene3D" id="3.90.1260.10">
    <property type="entry name" value="Argininosuccinate synthetase, chain A, domain 2"/>
    <property type="match status" value="1"/>
</dbReference>
<dbReference type="Gene3D" id="3.40.50.620">
    <property type="entry name" value="HUPs"/>
    <property type="match status" value="1"/>
</dbReference>
<dbReference type="Gene3D" id="1.20.5.470">
    <property type="entry name" value="Single helix bin"/>
    <property type="match status" value="1"/>
</dbReference>
<dbReference type="HAMAP" id="MF_00005">
    <property type="entry name" value="Arg_succ_synth_type1"/>
    <property type="match status" value="1"/>
</dbReference>
<dbReference type="InterPro" id="IPR048268">
    <property type="entry name" value="Arginosuc_syn_C"/>
</dbReference>
<dbReference type="InterPro" id="IPR048267">
    <property type="entry name" value="Arginosuc_syn_N"/>
</dbReference>
<dbReference type="InterPro" id="IPR001518">
    <property type="entry name" value="Arginosuc_synth"/>
</dbReference>
<dbReference type="InterPro" id="IPR018223">
    <property type="entry name" value="Arginosuc_synth_CS"/>
</dbReference>
<dbReference type="InterPro" id="IPR023434">
    <property type="entry name" value="Arginosuc_synth_type_1_subfam"/>
</dbReference>
<dbReference type="InterPro" id="IPR024074">
    <property type="entry name" value="AS_cat/multimer_dom_body"/>
</dbReference>
<dbReference type="InterPro" id="IPR014729">
    <property type="entry name" value="Rossmann-like_a/b/a_fold"/>
</dbReference>
<dbReference type="NCBIfam" id="TIGR00032">
    <property type="entry name" value="argG"/>
    <property type="match status" value="1"/>
</dbReference>
<dbReference type="NCBIfam" id="NF001770">
    <property type="entry name" value="PRK00509.1"/>
    <property type="match status" value="1"/>
</dbReference>
<dbReference type="PANTHER" id="PTHR11587">
    <property type="entry name" value="ARGININOSUCCINATE SYNTHASE"/>
    <property type="match status" value="1"/>
</dbReference>
<dbReference type="PANTHER" id="PTHR11587:SF2">
    <property type="entry name" value="ARGININOSUCCINATE SYNTHASE"/>
    <property type="match status" value="1"/>
</dbReference>
<dbReference type="Pfam" id="PF20979">
    <property type="entry name" value="Arginosuc_syn_C"/>
    <property type="match status" value="1"/>
</dbReference>
<dbReference type="Pfam" id="PF00764">
    <property type="entry name" value="Arginosuc_synth"/>
    <property type="match status" value="1"/>
</dbReference>
<dbReference type="SUPFAM" id="SSF52402">
    <property type="entry name" value="Adenine nucleotide alpha hydrolases-like"/>
    <property type="match status" value="1"/>
</dbReference>
<dbReference type="SUPFAM" id="SSF69864">
    <property type="entry name" value="Argininosuccinate synthetase, C-terminal domain"/>
    <property type="match status" value="1"/>
</dbReference>
<dbReference type="PROSITE" id="PS00564">
    <property type="entry name" value="ARGININOSUCCIN_SYN_1"/>
    <property type="match status" value="1"/>
</dbReference>
<dbReference type="PROSITE" id="PS00565">
    <property type="entry name" value="ARGININOSUCCIN_SYN_2"/>
    <property type="match status" value="1"/>
</dbReference>
<keyword id="KW-0028">Amino-acid biosynthesis</keyword>
<keyword id="KW-0055">Arginine biosynthesis</keyword>
<keyword id="KW-0067">ATP-binding</keyword>
<keyword id="KW-0963">Cytoplasm</keyword>
<keyword id="KW-0436">Ligase</keyword>
<keyword id="KW-0547">Nucleotide-binding</keyword>
<protein>
    <recommendedName>
        <fullName evidence="1">Argininosuccinate synthase</fullName>
        <ecNumber evidence="1">6.3.4.5</ecNumber>
    </recommendedName>
    <alternativeName>
        <fullName evidence="1">Citrulline--aspartate ligase</fullName>
    </alternativeName>
</protein>
<organism>
    <name type="scientific">Vibrio parahaemolyticus serotype O3:K6 (strain RIMD 2210633)</name>
    <dbReference type="NCBI Taxonomy" id="223926"/>
    <lineage>
        <taxon>Bacteria</taxon>
        <taxon>Pseudomonadati</taxon>
        <taxon>Pseudomonadota</taxon>
        <taxon>Gammaproteobacteria</taxon>
        <taxon>Vibrionales</taxon>
        <taxon>Vibrionaceae</taxon>
        <taxon>Vibrio</taxon>
    </lineage>
</organism>
<feature type="chain" id="PRO_0000148662" description="Argininosuccinate synthase">
    <location>
        <begin position="1"/>
        <end position="404"/>
    </location>
</feature>
<feature type="binding site" evidence="1">
    <location>
        <begin position="12"/>
        <end position="20"/>
    </location>
    <ligand>
        <name>ATP</name>
        <dbReference type="ChEBI" id="CHEBI:30616"/>
    </ligand>
</feature>
<feature type="binding site" evidence="1">
    <location>
        <position position="39"/>
    </location>
    <ligand>
        <name>ATP</name>
        <dbReference type="ChEBI" id="CHEBI:30616"/>
    </ligand>
</feature>
<feature type="binding site" evidence="1">
    <location>
        <position position="91"/>
    </location>
    <ligand>
        <name>L-citrulline</name>
        <dbReference type="ChEBI" id="CHEBI:57743"/>
    </ligand>
</feature>
<feature type="binding site" evidence="1">
    <location>
        <position position="96"/>
    </location>
    <ligand>
        <name>L-citrulline</name>
        <dbReference type="ChEBI" id="CHEBI:57743"/>
    </ligand>
</feature>
<feature type="binding site" evidence="1">
    <location>
        <position position="121"/>
    </location>
    <ligand>
        <name>ATP</name>
        <dbReference type="ChEBI" id="CHEBI:30616"/>
    </ligand>
</feature>
<feature type="binding site" evidence="1">
    <location>
        <position position="123"/>
    </location>
    <ligand>
        <name>L-aspartate</name>
        <dbReference type="ChEBI" id="CHEBI:29991"/>
    </ligand>
</feature>
<feature type="binding site" evidence="1">
    <location>
        <position position="127"/>
    </location>
    <ligand>
        <name>L-aspartate</name>
        <dbReference type="ChEBI" id="CHEBI:29991"/>
    </ligand>
</feature>
<feature type="binding site" evidence="1">
    <location>
        <position position="127"/>
    </location>
    <ligand>
        <name>L-citrulline</name>
        <dbReference type="ChEBI" id="CHEBI:57743"/>
    </ligand>
</feature>
<feature type="binding site" evidence="1">
    <location>
        <position position="128"/>
    </location>
    <ligand>
        <name>L-aspartate</name>
        <dbReference type="ChEBI" id="CHEBI:29991"/>
    </ligand>
</feature>
<feature type="binding site" evidence="1">
    <location>
        <position position="131"/>
    </location>
    <ligand>
        <name>L-citrulline</name>
        <dbReference type="ChEBI" id="CHEBI:57743"/>
    </ligand>
</feature>
<feature type="binding site" evidence="1">
    <location>
        <position position="180"/>
    </location>
    <ligand>
        <name>L-citrulline</name>
        <dbReference type="ChEBI" id="CHEBI:57743"/>
    </ligand>
</feature>
<feature type="binding site" evidence="1">
    <location>
        <position position="189"/>
    </location>
    <ligand>
        <name>L-citrulline</name>
        <dbReference type="ChEBI" id="CHEBI:57743"/>
    </ligand>
</feature>
<feature type="binding site" evidence="1">
    <location>
        <position position="265"/>
    </location>
    <ligand>
        <name>L-citrulline</name>
        <dbReference type="ChEBI" id="CHEBI:57743"/>
    </ligand>
</feature>
<feature type="binding site" evidence="1">
    <location>
        <position position="277"/>
    </location>
    <ligand>
        <name>L-citrulline</name>
        <dbReference type="ChEBI" id="CHEBI:57743"/>
    </ligand>
</feature>
<evidence type="ECO:0000255" key="1">
    <source>
        <dbReference type="HAMAP-Rule" id="MF_00005"/>
    </source>
</evidence>
<sequence length="404" mass="44517">MSKVNVNKVVVAYSGGLDTSVIIPWLKENYDCEVVAFVADVGQGAEELEGIEAKAKASGASECYIADLKEEMVADYIYPTLKTGAYYEGKYLLGTSMARPIIAKAQVEVARKVGADALCHGCTGKGNDQVRFEGAFAALAPDLHVIAPWREWDLVSREQCLDYLAERNIPCSASLTKIYSRDANAWHISTEGGVLENTWNAPNEDCWVWTVDPEQAPNEAEYVTLKVEKGEVVAVDGEAMTPYNALVYLNEKGAKHGVGRIDIVENRLVGMKSRGCYETPGGTIMMEALRAVEQLVLDKSSFEFREELGLKASHLVYDGRWFTPLCKSILAASEELAQDVNGEVVVKLYKGQATVTQKRSDNSLYSEEFATFGEDEVYDQSHAGGFIRLYSLSSRIRALNSQKK</sequence>